<name>RL28_LISMC</name>
<dbReference type="EMBL" id="FM242711">
    <property type="protein sequence ID" value="CAS05590.1"/>
    <property type="molecule type" value="Genomic_DNA"/>
</dbReference>
<dbReference type="RefSeq" id="WP_003720131.1">
    <property type="nucleotide sequence ID" value="NC_012488.1"/>
</dbReference>
<dbReference type="SMR" id="C1KWB5"/>
<dbReference type="GeneID" id="93239727"/>
<dbReference type="KEGG" id="lmc:Lm4b_01832"/>
<dbReference type="HOGENOM" id="CLU_064548_7_1_9"/>
<dbReference type="GO" id="GO:1990904">
    <property type="term" value="C:ribonucleoprotein complex"/>
    <property type="evidence" value="ECO:0007669"/>
    <property type="project" value="UniProtKB-KW"/>
</dbReference>
<dbReference type="GO" id="GO:0005840">
    <property type="term" value="C:ribosome"/>
    <property type="evidence" value="ECO:0007669"/>
    <property type="project" value="UniProtKB-KW"/>
</dbReference>
<dbReference type="GO" id="GO:0003735">
    <property type="term" value="F:structural constituent of ribosome"/>
    <property type="evidence" value="ECO:0007669"/>
    <property type="project" value="InterPro"/>
</dbReference>
<dbReference type="GO" id="GO:0006412">
    <property type="term" value="P:translation"/>
    <property type="evidence" value="ECO:0007669"/>
    <property type="project" value="UniProtKB-UniRule"/>
</dbReference>
<dbReference type="Gene3D" id="2.30.170.40">
    <property type="entry name" value="Ribosomal protein L28/L24"/>
    <property type="match status" value="1"/>
</dbReference>
<dbReference type="HAMAP" id="MF_00373">
    <property type="entry name" value="Ribosomal_bL28"/>
    <property type="match status" value="1"/>
</dbReference>
<dbReference type="InterPro" id="IPR050096">
    <property type="entry name" value="Bacterial_rp_bL28"/>
</dbReference>
<dbReference type="InterPro" id="IPR026569">
    <property type="entry name" value="Ribosomal_bL28"/>
</dbReference>
<dbReference type="InterPro" id="IPR034704">
    <property type="entry name" value="Ribosomal_bL28/bL31-like_sf"/>
</dbReference>
<dbReference type="InterPro" id="IPR001383">
    <property type="entry name" value="Ribosomal_bL28_bact-type"/>
</dbReference>
<dbReference type="InterPro" id="IPR037147">
    <property type="entry name" value="Ribosomal_bL28_sf"/>
</dbReference>
<dbReference type="NCBIfam" id="TIGR00009">
    <property type="entry name" value="L28"/>
    <property type="match status" value="1"/>
</dbReference>
<dbReference type="PANTHER" id="PTHR39080">
    <property type="entry name" value="50S RIBOSOMAL PROTEIN L28"/>
    <property type="match status" value="1"/>
</dbReference>
<dbReference type="PANTHER" id="PTHR39080:SF1">
    <property type="entry name" value="LARGE RIBOSOMAL SUBUNIT PROTEIN BL28A"/>
    <property type="match status" value="1"/>
</dbReference>
<dbReference type="Pfam" id="PF00830">
    <property type="entry name" value="Ribosomal_L28"/>
    <property type="match status" value="1"/>
</dbReference>
<dbReference type="SUPFAM" id="SSF143800">
    <property type="entry name" value="L28p-like"/>
    <property type="match status" value="1"/>
</dbReference>
<accession>C1KWB5</accession>
<evidence type="ECO:0000255" key="1">
    <source>
        <dbReference type="HAMAP-Rule" id="MF_00373"/>
    </source>
</evidence>
<evidence type="ECO:0000256" key="2">
    <source>
        <dbReference type="SAM" id="MobiDB-lite"/>
    </source>
</evidence>
<evidence type="ECO:0000305" key="3"/>
<comment type="similarity">
    <text evidence="1">Belongs to the bacterial ribosomal protein bL28 family.</text>
</comment>
<gene>
    <name evidence="1" type="primary">rpmB</name>
    <name type="ordered locus">Lm4b_01832</name>
</gene>
<reference key="1">
    <citation type="journal article" date="2012" name="BMC Genomics">
        <title>Comparative genomics and transcriptomics of lineages I, II, and III strains of Listeria monocytogenes.</title>
        <authorList>
            <person name="Hain T."/>
            <person name="Ghai R."/>
            <person name="Billion A."/>
            <person name="Kuenne C.T."/>
            <person name="Steinweg C."/>
            <person name="Izar B."/>
            <person name="Mohamed W."/>
            <person name="Mraheil M."/>
            <person name="Domann E."/>
            <person name="Schaffrath S."/>
            <person name="Karst U."/>
            <person name="Goesmann A."/>
            <person name="Oehm S."/>
            <person name="Puhler A."/>
            <person name="Merkl R."/>
            <person name="Vorwerk S."/>
            <person name="Glaser P."/>
            <person name="Garrido P."/>
            <person name="Rusniok C."/>
            <person name="Buchrieser C."/>
            <person name="Goebel W."/>
            <person name="Chakraborty T."/>
        </authorList>
    </citation>
    <scope>NUCLEOTIDE SEQUENCE [LARGE SCALE GENOMIC DNA]</scope>
    <source>
        <strain>CLIP80459</strain>
    </source>
</reference>
<feature type="chain" id="PRO_1000205605" description="Large ribosomal subunit protein bL28">
    <location>
        <begin position="1"/>
        <end position="62"/>
    </location>
</feature>
<feature type="region of interest" description="Disordered" evidence="2">
    <location>
        <begin position="1"/>
        <end position="27"/>
    </location>
</feature>
<feature type="compositionally biased region" description="Basic residues" evidence="2">
    <location>
        <begin position="10"/>
        <end position="20"/>
    </location>
</feature>
<keyword id="KW-0687">Ribonucleoprotein</keyword>
<keyword id="KW-0689">Ribosomal protein</keyword>
<organism>
    <name type="scientific">Listeria monocytogenes serotype 4b (strain CLIP80459)</name>
    <dbReference type="NCBI Taxonomy" id="568819"/>
    <lineage>
        <taxon>Bacteria</taxon>
        <taxon>Bacillati</taxon>
        <taxon>Bacillota</taxon>
        <taxon>Bacilli</taxon>
        <taxon>Bacillales</taxon>
        <taxon>Listeriaceae</taxon>
        <taxon>Listeria</taxon>
    </lineage>
</organism>
<protein>
    <recommendedName>
        <fullName evidence="1">Large ribosomal subunit protein bL28</fullName>
    </recommendedName>
    <alternativeName>
        <fullName evidence="3">50S ribosomal protein L28</fullName>
    </alternativeName>
</protein>
<proteinExistence type="inferred from homology"/>
<sequence length="62" mass="6991">MAKECVITGRKSRSGNKRSHAMNSSKRTWKANLQKVRILVNGKPKKVWVSARALKSGKVERV</sequence>